<feature type="chain" id="PRO_0000282274" description="UPF0060 membrane protein XC_1229">
    <location>
        <begin position="1"/>
        <end position="111"/>
    </location>
</feature>
<feature type="transmembrane region" description="Helical" evidence="1">
    <location>
        <begin position="8"/>
        <end position="28"/>
    </location>
</feature>
<feature type="transmembrane region" description="Helical" evidence="1">
    <location>
        <begin position="34"/>
        <end position="54"/>
    </location>
</feature>
<feature type="transmembrane region" description="Helical" evidence="1">
    <location>
        <begin position="62"/>
        <end position="82"/>
    </location>
</feature>
<feature type="transmembrane region" description="Helical" evidence="1">
    <location>
        <begin position="91"/>
        <end position="111"/>
    </location>
</feature>
<comment type="subcellular location">
    <subcellularLocation>
        <location evidence="1">Cell inner membrane</location>
        <topology evidence="1">Multi-pass membrane protein</topology>
    </subcellularLocation>
</comment>
<comment type="similarity">
    <text evidence="1">Belongs to the UPF0060 family.</text>
</comment>
<proteinExistence type="inferred from homology"/>
<organism>
    <name type="scientific">Xanthomonas campestris pv. campestris (strain 8004)</name>
    <dbReference type="NCBI Taxonomy" id="314565"/>
    <lineage>
        <taxon>Bacteria</taxon>
        <taxon>Pseudomonadati</taxon>
        <taxon>Pseudomonadota</taxon>
        <taxon>Gammaproteobacteria</taxon>
        <taxon>Lysobacterales</taxon>
        <taxon>Lysobacteraceae</taxon>
        <taxon>Xanthomonas</taxon>
    </lineage>
</organism>
<gene>
    <name type="ordered locus">XC_1229</name>
</gene>
<name>Y1229_XANC8</name>
<evidence type="ECO:0000255" key="1">
    <source>
        <dbReference type="HAMAP-Rule" id="MF_00010"/>
    </source>
</evidence>
<sequence>MSVALTTLLLFVATAVAELVGCYLPYLWLRKGGSVWLLLPAALSLAVFVWLLTLHPAASGRVYAAYGGVYIATALLWLWWVDRVTPTRWDLLGAGCCLLGMAIIMFSPRSG</sequence>
<accession>Q4UXC5</accession>
<protein>
    <recommendedName>
        <fullName evidence="1">UPF0060 membrane protein XC_1229</fullName>
    </recommendedName>
</protein>
<dbReference type="EMBL" id="CP000050">
    <property type="protein sequence ID" value="AAY48298.1"/>
    <property type="molecule type" value="Genomic_DNA"/>
</dbReference>
<dbReference type="RefSeq" id="WP_011038005.1">
    <property type="nucleotide sequence ID" value="NZ_CP155948.1"/>
</dbReference>
<dbReference type="KEGG" id="xcb:XC_1229"/>
<dbReference type="HOGENOM" id="CLU_117653_2_0_6"/>
<dbReference type="Proteomes" id="UP000000420">
    <property type="component" value="Chromosome"/>
</dbReference>
<dbReference type="GO" id="GO:0005886">
    <property type="term" value="C:plasma membrane"/>
    <property type="evidence" value="ECO:0007669"/>
    <property type="project" value="UniProtKB-SubCell"/>
</dbReference>
<dbReference type="HAMAP" id="MF_00010">
    <property type="entry name" value="UPF0060"/>
    <property type="match status" value="1"/>
</dbReference>
<dbReference type="InterPro" id="IPR003844">
    <property type="entry name" value="UPF0060"/>
</dbReference>
<dbReference type="NCBIfam" id="NF002586">
    <property type="entry name" value="PRK02237.1"/>
    <property type="match status" value="1"/>
</dbReference>
<dbReference type="PANTHER" id="PTHR36116">
    <property type="entry name" value="UPF0060 MEMBRANE PROTEIN YNFA"/>
    <property type="match status" value="1"/>
</dbReference>
<dbReference type="PANTHER" id="PTHR36116:SF1">
    <property type="entry name" value="UPF0060 MEMBRANE PROTEIN YNFA"/>
    <property type="match status" value="1"/>
</dbReference>
<dbReference type="Pfam" id="PF02694">
    <property type="entry name" value="UPF0060"/>
    <property type="match status" value="1"/>
</dbReference>
<dbReference type="SUPFAM" id="SSF103481">
    <property type="entry name" value="Multidrug resistance efflux transporter EmrE"/>
    <property type="match status" value="1"/>
</dbReference>
<reference key="1">
    <citation type="journal article" date="2005" name="Genome Res.">
        <title>Comparative and functional genomic analyses of the pathogenicity of phytopathogen Xanthomonas campestris pv. campestris.</title>
        <authorList>
            <person name="Qian W."/>
            <person name="Jia Y."/>
            <person name="Ren S.-X."/>
            <person name="He Y.-Q."/>
            <person name="Feng J.-X."/>
            <person name="Lu L.-F."/>
            <person name="Sun Q."/>
            <person name="Ying G."/>
            <person name="Tang D.-J."/>
            <person name="Tang H."/>
            <person name="Wu W."/>
            <person name="Hao P."/>
            <person name="Wang L."/>
            <person name="Jiang B.-L."/>
            <person name="Zeng S."/>
            <person name="Gu W.-Y."/>
            <person name="Lu G."/>
            <person name="Rong L."/>
            <person name="Tian Y."/>
            <person name="Yao Z."/>
            <person name="Fu G."/>
            <person name="Chen B."/>
            <person name="Fang R."/>
            <person name="Qiang B."/>
            <person name="Chen Z."/>
            <person name="Zhao G.-P."/>
            <person name="Tang J.-L."/>
            <person name="He C."/>
        </authorList>
    </citation>
    <scope>NUCLEOTIDE SEQUENCE [LARGE SCALE GENOMIC DNA]</scope>
    <source>
        <strain>8004</strain>
    </source>
</reference>
<keyword id="KW-0997">Cell inner membrane</keyword>
<keyword id="KW-1003">Cell membrane</keyword>
<keyword id="KW-0472">Membrane</keyword>
<keyword id="KW-0812">Transmembrane</keyword>
<keyword id="KW-1133">Transmembrane helix</keyword>